<organism>
    <name type="scientific">Piper cenocladum</name>
    <name type="common">Ant piper</name>
    <dbReference type="NCBI Taxonomy" id="398741"/>
    <lineage>
        <taxon>Eukaryota</taxon>
        <taxon>Viridiplantae</taxon>
        <taxon>Streptophyta</taxon>
        <taxon>Embryophyta</taxon>
        <taxon>Tracheophyta</taxon>
        <taxon>Spermatophyta</taxon>
        <taxon>Magnoliopsida</taxon>
        <taxon>Magnoliidae</taxon>
        <taxon>Piperales</taxon>
        <taxon>Piperaceae</taxon>
        <taxon>Piper</taxon>
    </lineage>
</organism>
<feature type="chain" id="PRO_0000360966" description="NAD(P)H-quinone oxidoreductase subunit 5, chloroplastic">
    <location>
        <begin position="1"/>
        <end position="740"/>
    </location>
</feature>
<feature type="transmembrane region" description="Helical" evidence="2">
    <location>
        <begin position="9"/>
        <end position="29"/>
    </location>
</feature>
<feature type="transmembrane region" description="Helical" evidence="2">
    <location>
        <begin position="40"/>
        <end position="60"/>
    </location>
</feature>
<feature type="transmembrane region" description="Helical" evidence="2">
    <location>
        <begin position="89"/>
        <end position="109"/>
    </location>
</feature>
<feature type="transmembrane region" description="Helical" evidence="2">
    <location>
        <begin position="125"/>
        <end position="145"/>
    </location>
</feature>
<feature type="transmembrane region" description="Helical" evidence="2">
    <location>
        <begin position="147"/>
        <end position="167"/>
    </location>
</feature>
<feature type="transmembrane region" description="Helical" evidence="2">
    <location>
        <begin position="185"/>
        <end position="205"/>
    </location>
</feature>
<feature type="transmembrane region" description="Helical" evidence="2">
    <location>
        <begin position="219"/>
        <end position="239"/>
    </location>
</feature>
<feature type="transmembrane region" description="Helical" evidence="2">
    <location>
        <begin position="258"/>
        <end position="278"/>
    </location>
</feature>
<feature type="transmembrane region" description="Helical" evidence="2">
    <location>
        <begin position="290"/>
        <end position="310"/>
    </location>
</feature>
<feature type="transmembrane region" description="Helical" evidence="2">
    <location>
        <begin position="327"/>
        <end position="347"/>
    </location>
</feature>
<feature type="transmembrane region" description="Helical" evidence="2">
    <location>
        <begin position="354"/>
        <end position="374"/>
    </location>
</feature>
<feature type="transmembrane region" description="Helical" evidence="2">
    <location>
        <begin position="396"/>
        <end position="416"/>
    </location>
</feature>
<feature type="transmembrane region" description="Helical" evidence="2">
    <location>
        <begin position="425"/>
        <end position="445"/>
    </location>
</feature>
<feature type="transmembrane region" description="Helical" evidence="2">
    <location>
        <begin position="521"/>
        <end position="538"/>
    </location>
</feature>
<feature type="transmembrane region" description="Helical" evidence="2">
    <location>
        <begin position="545"/>
        <end position="565"/>
    </location>
</feature>
<feature type="transmembrane region" description="Helical" evidence="2">
    <location>
        <begin position="599"/>
        <end position="619"/>
    </location>
</feature>
<feature type="transmembrane region" description="Helical" evidence="2">
    <location>
        <begin position="720"/>
        <end position="740"/>
    </location>
</feature>
<dbReference type="EC" id="7.1.1.-"/>
<dbReference type="EMBL" id="DQ887677">
    <property type="protein sequence ID" value="ABI14529.1"/>
    <property type="molecule type" value="Genomic_DNA"/>
</dbReference>
<dbReference type="RefSeq" id="YP_784531.1">
    <property type="nucleotide sequence ID" value="NC_008457.1"/>
</dbReference>
<dbReference type="SMR" id="Q06GK2"/>
<dbReference type="GeneID" id="4363680"/>
<dbReference type="GO" id="GO:0009535">
    <property type="term" value="C:chloroplast thylakoid membrane"/>
    <property type="evidence" value="ECO:0007669"/>
    <property type="project" value="UniProtKB-SubCell"/>
</dbReference>
<dbReference type="GO" id="GO:0008137">
    <property type="term" value="F:NADH dehydrogenase (ubiquinone) activity"/>
    <property type="evidence" value="ECO:0007669"/>
    <property type="project" value="InterPro"/>
</dbReference>
<dbReference type="GO" id="GO:0048038">
    <property type="term" value="F:quinone binding"/>
    <property type="evidence" value="ECO:0007669"/>
    <property type="project" value="UniProtKB-KW"/>
</dbReference>
<dbReference type="GO" id="GO:0042773">
    <property type="term" value="P:ATP synthesis coupled electron transport"/>
    <property type="evidence" value="ECO:0007669"/>
    <property type="project" value="InterPro"/>
</dbReference>
<dbReference type="GO" id="GO:0015990">
    <property type="term" value="P:electron transport coupled proton transport"/>
    <property type="evidence" value="ECO:0007669"/>
    <property type="project" value="TreeGrafter"/>
</dbReference>
<dbReference type="Gene3D" id="1.20.5.2700">
    <property type="match status" value="1"/>
</dbReference>
<dbReference type="InterPro" id="IPR002128">
    <property type="entry name" value="NADH_UbQ_OxRdtase_chlpt_su5_C"/>
</dbReference>
<dbReference type="InterPro" id="IPR018393">
    <property type="entry name" value="NADHpl_OxRdtase_5_subgr"/>
</dbReference>
<dbReference type="InterPro" id="IPR001750">
    <property type="entry name" value="ND/Mrp_TM"/>
</dbReference>
<dbReference type="InterPro" id="IPR003945">
    <property type="entry name" value="NU5C-like"/>
</dbReference>
<dbReference type="InterPro" id="IPR001516">
    <property type="entry name" value="Proton_antipo_N"/>
</dbReference>
<dbReference type="NCBIfam" id="TIGR01974">
    <property type="entry name" value="NDH_I_L"/>
    <property type="match status" value="1"/>
</dbReference>
<dbReference type="NCBIfam" id="NF005141">
    <property type="entry name" value="PRK06590.1"/>
    <property type="match status" value="1"/>
</dbReference>
<dbReference type="PANTHER" id="PTHR42829">
    <property type="entry name" value="NADH-UBIQUINONE OXIDOREDUCTASE CHAIN 5"/>
    <property type="match status" value="1"/>
</dbReference>
<dbReference type="PANTHER" id="PTHR42829:SF2">
    <property type="entry name" value="NADH-UBIQUINONE OXIDOREDUCTASE CHAIN 5"/>
    <property type="match status" value="1"/>
</dbReference>
<dbReference type="Pfam" id="PF01010">
    <property type="entry name" value="Proton_antipo_C"/>
    <property type="match status" value="1"/>
</dbReference>
<dbReference type="Pfam" id="PF00361">
    <property type="entry name" value="Proton_antipo_M"/>
    <property type="match status" value="1"/>
</dbReference>
<dbReference type="Pfam" id="PF00662">
    <property type="entry name" value="Proton_antipo_N"/>
    <property type="match status" value="1"/>
</dbReference>
<dbReference type="PRINTS" id="PR01434">
    <property type="entry name" value="NADHDHGNASE5"/>
</dbReference>
<dbReference type="PRINTS" id="PR01435">
    <property type="entry name" value="NPOXDRDTASE5"/>
</dbReference>
<name>NU5C_PIPCE</name>
<geneLocation type="chloroplast"/>
<keyword id="KW-0150">Chloroplast</keyword>
<keyword id="KW-0472">Membrane</keyword>
<keyword id="KW-0520">NAD</keyword>
<keyword id="KW-0521">NADP</keyword>
<keyword id="KW-0934">Plastid</keyword>
<keyword id="KW-0618">Plastoquinone</keyword>
<keyword id="KW-0874">Quinone</keyword>
<keyword id="KW-0793">Thylakoid</keyword>
<keyword id="KW-1278">Translocase</keyword>
<keyword id="KW-0812">Transmembrane</keyword>
<keyword id="KW-1133">Transmembrane helix</keyword>
<keyword id="KW-0813">Transport</keyword>
<evidence type="ECO:0000250" key="1"/>
<evidence type="ECO:0000255" key="2"/>
<evidence type="ECO:0000305" key="3"/>
<reference key="1">
    <citation type="journal article" date="2006" name="BMC Evol. Biol.">
        <title>Complete plastid genome sequences of Drimys, Liriodendron, and Piper: implications for the phylogenetic relationships of magnoliids.</title>
        <authorList>
            <person name="Cai Z."/>
            <person name="Penaflor C."/>
            <person name="Kuehl J.V."/>
            <person name="Leebens-Mack J."/>
            <person name="Carlson J.E."/>
            <person name="dePamphilis C.W."/>
            <person name="Boore J.L."/>
            <person name="Jansen R.K."/>
        </authorList>
    </citation>
    <scope>NUCLEOTIDE SEQUENCE [LARGE SCALE GENOMIC DNA]</scope>
</reference>
<protein>
    <recommendedName>
        <fullName>NAD(P)H-quinone oxidoreductase subunit 5, chloroplastic</fullName>
        <ecNumber>7.1.1.-</ecNumber>
    </recommendedName>
    <alternativeName>
        <fullName>NAD(P)H dehydrogenase subunit 5</fullName>
    </alternativeName>
    <alternativeName>
        <fullName>NADH-plastoquinone oxidoreductase subunit 5</fullName>
    </alternativeName>
</protein>
<proteinExistence type="inferred from homology"/>
<comment type="function">
    <text evidence="1">NDH shuttles electrons from NAD(P)H:plastoquinone, via FMN and iron-sulfur (Fe-S) centers, to quinones in the photosynthetic chain and possibly in a chloroplast respiratory chain. The immediate electron acceptor for the enzyme in this species is believed to be plastoquinone. Couples the redox reaction to proton translocation, and thus conserves the redox energy in a proton gradient (By similarity).</text>
</comment>
<comment type="catalytic activity">
    <reaction>
        <text>a plastoquinone + NADH + (n+1) H(+)(in) = a plastoquinol + NAD(+) + n H(+)(out)</text>
        <dbReference type="Rhea" id="RHEA:42608"/>
        <dbReference type="Rhea" id="RHEA-COMP:9561"/>
        <dbReference type="Rhea" id="RHEA-COMP:9562"/>
        <dbReference type="ChEBI" id="CHEBI:15378"/>
        <dbReference type="ChEBI" id="CHEBI:17757"/>
        <dbReference type="ChEBI" id="CHEBI:57540"/>
        <dbReference type="ChEBI" id="CHEBI:57945"/>
        <dbReference type="ChEBI" id="CHEBI:62192"/>
    </reaction>
</comment>
<comment type="catalytic activity">
    <reaction>
        <text>a plastoquinone + NADPH + (n+1) H(+)(in) = a plastoquinol + NADP(+) + n H(+)(out)</text>
        <dbReference type="Rhea" id="RHEA:42612"/>
        <dbReference type="Rhea" id="RHEA-COMP:9561"/>
        <dbReference type="Rhea" id="RHEA-COMP:9562"/>
        <dbReference type="ChEBI" id="CHEBI:15378"/>
        <dbReference type="ChEBI" id="CHEBI:17757"/>
        <dbReference type="ChEBI" id="CHEBI:57783"/>
        <dbReference type="ChEBI" id="CHEBI:58349"/>
        <dbReference type="ChEBI" id="CHEBI:62192"/>
    </reaction>
</comment>
<comment type="subunit">
    <text evidence="1">NDH is composed of at least 16 different subunits, 5 of which are encoded in the nucleus.</text>
</comment>
<comment type="subcellular location">
    <subcellularLocation>
        <location evidence="1">Plastid</location>
        <location evidence="1">Chloroplast thylakoid membrane</location>
        <topology evidence="1">Multi-pass membrane protein</topology>
    </subcellularLocation>
</comment>
<comment type="similarity">
    <text evidence="3">Belongs to the complex I subunit 5 family.</text>
</comment>
<gene>
    <name type="primary">ndhF</name>
</gene>
<accession>Q06GK2</accession>
<sequence length="740" mass="83544">MERTYPYAWIIPFIPLPVTVLVGLGLLVVPNATKKIRRMWAFISVLLLSIALLFSINISIQQIGGSSIYQYLWSWTINNDFSLEFGYLIDSLTSIMLILITTVGIMVLIYSDNYMSHDQGYLRFFAYLNFFNASMLGLVTSSNLIQIYIFWELVGMCSYLLIGFWFTRPSAANACQKAFVTNRVGDFGLLLGILGLYWITGSFEFRDLFEIFNILVHNNTINLFFAALCASLLFLGAIAKSAQFPLHVWLPDAMEGPTPISALIHAATMVAAGIFLVARLFPLFINLPYIMYFISLIGIITVLLGATLALAQRDIKRSLAYSTMSQLGYIMLAMGIGSYRAALFHLITHAYSKALLFLGSGSIIHSMEPIVGYSPDKSQNMVLMGGLTKYVPITKTTFLLGTLSLCGIPPLACFWSKDEILNDSWLYSPIFAIIAYSTAGLTAFYMFRVYLLTFDGHLRIHFTNLNGAKSRSLYSISIWGKEESNLNNTNCFLSEINKNDEKVFFFSKKTYKIGKYARNRMFSFSIFFGNEIVFPYPHESDSTMLLSVCVLGLFTLFVGFIGIPLNQGIVDFDILSKWLTPSINLLHKNAHYSVDWYEFVINAIFSVSIALFGIFIASFLYGSVFSSFKSLDLINSFETKGKKRIFLDRILNVIYNWSDNRGYIDTLFSLYLTRNIRKLSELTHSFDKRLIDGITNGVGVASFFVGEGFKYVGGGRISSYLFVYLSYVSVFLVVIYYFVL</sequence>